<sequence>MTDILKTTYSEEVFSSALELMPGGVSSPVRAFKSVGGQPIVFDRVKGPYAWDIDGNRYIDYIGSWGPAICGHAHPEVITALQEAIEKGTSFGAPCVLENKLAEMVIDAVPSVEMVRFVNSGTEACMAVLRLMRAFTGRDKVIKFDGCYHGHADMFLVKAGSGVATLGLPDSPGVPRTTTANTLTAPYNDLEAVKKLFSENPDAISGVILEPIVGNAGFITPEPGFLEGLRELTTENGSLLVFDEVMTGFRISYGGAQEKFGVTPDLTTLGKVIGGGLPVGAYGGKKEIMSMVAPSGPVYQAGTLSGNPLAMTAGIKTLELLKQEGTYEKLESTTSRLIEGIIQSAENNGIAINGGSVSAMFGFFLCEGPVRNFEEAKTNNSELFGKLHREMLKRGVYLAPSPFEAGFTSLAHSEEEIDRTLEAFDQSFSVIKN</sequence>
<accession>Q7V2J3</accession>
<reference key="1">
    <citation type="journal article" date="2003" name="Nature">
        <title>Genome divergence in two Prochlorococcus ecotypes reflects oceanic niche differentiation.</title>
        <authorList>
            <person name="Rocap G."/>
            <person name="Larimer F.W."/>
            <person name="Lamerdin J.E."/>
            <person name="Malfatti S."/>
            <person name="Chain P."/>
            <person name="Ahlgren N.A."/>
            <person name="Arellano A."/>
            <person name="Coleman M."/>
            <person name="Hauser L."/>
            <person name="Hess W.R."/>
            <person name="Johnson Z.I."/>
            <person name="Land M.L."/>
            <person name="Lindell D."/>
            <person name="Post A.F."/>
            <person name="Regala W."/>
            <person name="Shah M."/>
            <person name="Shaw S.L."/>
            <person name="Steglich C."/>
            <person name="Sullivan M.B."/>
            <person name="Ting C.S."/>
            <person name="Tolonen A."/>
            <person name="Webb E.A."/>
            <person name="Zinser E.R."/>
            <person name="Chisholm S.W."/>
        </authorList>
    </citation>
    <scope>NUCLEOTIDE SEQUENCE [LARGE SCALE GENOMIC DNA]</scope>
    <source>
        <strain>CCMP1986 / NIES-2087 / MED4</strain>
    </source>
</reference>
<name>GSA_PROMP</name>
<protein>
    <recommendedName>
        <fullName evidence="1">Glutamate-1-semialdehyde 2,1-aminomutase</fullName>
        <shortName evidence="1">GSA</shortName>
        <ecNumber evidence="1">5.4.3.8</ecNumber>
    </recommendedName>
    <alternativeName>
        <fullName evidence="1">Glutamate-1-semialdehyde aminotransferase</fullName>
        <shortName evidence="1">GSA-AT</shortName>
    </alternativeName>
</protein>
<feature type="chain" id="PRO_0000243600" description="Glutamate-1-semialdehyde 2,1-aminomutase">
    <location>
        <begin position="1"/>
        <end position="433"/>
    </location>
</feature>
<feature type="modified residue" description="N6-(pyridoxal phosphate)lysine" evidence="1">
    <location>
        <position position="271"/>
    </location>
</feature>
<evidence type="ECO:0000255" key="1">
    <source>
        <dbReference type="HAMAP-Rule" id="MF_00375"/>
    </source>
</evidence>
<gene>
    <name evidence="1" type="primary">hemL</name>
    <name type="ordered locus">PMM0483</name>
</gene>
<organism>
    <name type="scientific">Prochlorococcus marinus subsp. pastoris (strain CCMP1986 / NIES-2087 / MED4)</name>
    <dbReference type="NCBI Taxonomy" id="59919"/>
    <lineage>
        <taxon>Bacteria</taxon>
        <taxon>Bacillati</taxon>
        <taxon>Cyanobacteriota</taxon>
        <taxon>Cyanophyceae</taxon>
        <taxon>Synechococcales</taxon>
        <taxon>Prochlorococcaceae</taxon>
        <taxon>Prochlorococcus</taxon>
    </lineage>
</organism>
<proteinExistence type="inferred from homology"/>
<dbReference type="EC" id="5.4.3.8" evidence="1"/>
<dbReference type="EMBL" id="BX548174">
    <property type="protein sequence ID" value="CAE18942.1"/>
    <property type="molecule type" value="Genomic_DNA"/>
</dbReference>
<dbReference type="RefSeq" id="WP_011132118.1">
    <property type="nucleotide sequence ID" value="NC_005072.1"/>
</dbReference>
<dbReference type="SMR" id="Q7V2J3"/>
<dbReference type="STRING" id="59919.PMM0483"/>
<dbReference type="KEGG" id="pmm:PMM0483"/>
<dbReference type="eggNOG" id="COG0001">
    <property type="taxonomic scope" value="Bacteria"/>
</dbReference>
<dbReference type="HOGENOM" id="CLU_016922_1_5_3"/>
<dbReference type="OrthoDB" id="9807885at2"/>
<dbReference type="UniPathway" id="UPA00251">
    <property type="reaction ID" value="UER00317"/>
</dbReference>
<dbReference type="UniPathway" id="UPA00668"/>
<dbReference type="Proteomes" id="UP000001026">
    <property type="component" value="Chromosome"/>
</dbReference>
<dbReference type="GO" id="GO:0005737">
    <property type="term" value="C:cytoplasm"/>
    <property type="evidence" value="ECO:0007669"/>
    <property type="project" value="UniProtKB-SubCell"/>
</dbReference>
<dbReference type="GO" id="GO:0042286">
    <property type="term" value="F:glutamate-1-semialdehyde 2,1-aminomutase activity"/>
    <property type="evidence" value="ECO:0007669"/>
    <property type="project" value="UniProtKB-UniRule"/>
</dbReference>
<dbReference type="GO" id="GO:0030170">
    <property type="term" value="F:pyridoxal phosphate binding"/>
    <property type="evidence" value="ECO:0007669"/>
    <property type="project" value="InterPro"/>
</dbReference>
<dbReference type="GO" id="GO:0008483">
    <property type="term" value="F:transaminase activity"/>
    <property type="evidence" value="ECO:0007669"/>
    <property type="project" value="InterPro"/>
</dbReference>
<dbReference type="GO" id="GO:0015995">
    <property type="term" value="P:chlorophyll biosynthetic process"/>
    <property type="evidence" value="ECO:0007669"/>
    <property type="project" value="UniProtKB-UniRule"/>
</dbReference>
<dbReference type="GO" id="GO:0006782">
    <property type="term" value="P:protoporphyrinogen IX biosynthetic process"/>
    <property type="evidence" value="ECO:0007669"/>
    <property type="project" value="UniProtKB-UniRule"/>
</dbReference>
<dbReference type="CDD" id="cd00610">
    <property type="entry name" value="OAT_like"/>
    <property type="match status" value="1"/>
</dbReference>
<dbReference type="FunFam" id="3.40.640.10:FF:000021">
    <property type="entry name" value="Glutamate-1-semialdehyde 2,1-aminomutase"/>
    <property type="match status" value="1"/>
</dbReference>
<dbReference type="Gene3D" id="3.90.1150.10">
    <property type="entry name" value="Aspartate Aminotransferase, domain 1"/>
    <property type="match status" value="1"/>
</dbReference>
<dbReference type="Gene3D" id="3.40.640.10">
    <property type="entry name" value="Type I PLP-dependent aspartate aminotransferase-like (Major domain)"/>
    <property type="match status" value="1"/>
</dbReference>
<dbReference type="HAMAP" id="MF_00375">
    <property type="entry name" value="HemL_aminotrans_3"/>
    <property type="match status" value="1"/>
</dbReference>
<dbReference type="InterPro" id="IPR004639">
    <property type="entry name" value="4pyrrol_synth_GluAld_NH2Trfase"/>
</dbReference>
<dbReference type="InterPro" id="IPR005814">
    <property type="entry name" value="Aminotrans_3"/>
</dbReference>
<dbReference type="InterPro" id="IPR049704">
    <property type="entry name" value="Aminotrans_3_PPA_site"/>
</dbReference>
<dbReference type="InterPro" id="IPR015424">
    <property type="entry name" value="PyrdxlP-dep_Trfase"/>
</dbReference>
<dbReference type="InterPro" id="IPR015421">
    <property type="entry name" value="PyrdxlP-dep_Trfase_major"/>
</dbReference>
<dbReference type="InterPro" id="IPR015422">
    <property type="entry name" value="PyrdxlP-dep_Trfase_small"/>
</dbReference>
<dbReference type="NCBIfam" id="TIGR00713">
    <property type="entry name" value="hemL"/>
    <property type="match status" value="1"/>
</dbReference>
<dbReference type="NCBIfam" id="NF000818">
    <property type="entry name" value="PRK00062.1"/>
    <property type="match status" value="1"/>
</dbReference>
<dbReference type="PANTHER" id="PTHR43713">
    <property type="entry name" value="GLUTAMATE-1-SEMIALDEHYDE 2,1-AMINOMUTASE"/>
    <property type="match status" value="1"/>
</dbReference>
<dbReference type="PANTHER" id="PTHR43713:SF3">
    <property type="entry name" value="GLUTAMATE-1-SEMIALDEHYDE 2,1-AMINOMUTASE 1, CHLOROPLASTIC-RELATED"/>
    <property type="match status" value="1"/>
</dbReference>
<dbReference type="Pfam" id="PF00202">
    <property type="entry name" value="Aminotran_3"/>
    <property type="match status" value="1"/>
</dbReference>
<dbReference type="SUPFAM" id="SSF53383">
    <property type="entry name" value="PLP-dependent transferases"/>
    <property type="match status" value="1"/>
</dbReference>
<dbReference type="PROSITE" id="PS00600">
    <property type="entry name" value="AA_TRANSFER_CLASS_3"/>
    <property type="match status" value="1"/>
</dbReference>
<comment type="catalytic activity">
    <reaction evidence="1">
        <text>(S)-4-amino-5-oxopentanoate = 5-aminolevulinate</text>
        <dbReference type="Rhea" id="RHEA:14265"/>
        <dbReference type="ChEBI" id="CHEBI:57501"/>
        <dbReference type="ChEBI" id="CHEBI:356416"/>
        <dbReference type="EC" id="5.4.3.8"/>
    </reaction>
</comment>
<comment type="cofactor">
    <cofactor evidence="1">
        <name>pyridoxal 5'-phosphate</name>
        <dbReference type="ChEBI" id="CHEBI:597326"/>
    </cofactor>
</comment>
<comment type="pathway">
    <text evidence="1">Porphyrin-containing compound metabolism; protoporphyrin-IX biosynthesis; 5-aminolevulinate from L-glutamyl-tRNA(Glu): step 2/2.</text>
</comment>
<comment type="pathway">
    <text evidence="1">Porphyrin-containing compound metabolism; chlorophyll biosynthesis.</text>
</comment>
<comment type="subunit">
    <text evidence="1">Homodimer.</text>
</comment>
<comment type="subcellular location">
    <subcellularLocation>
        <location evidence="1">Cytoplasm</location>
    </subcellularLocation>
</comment>
<comment type="similarity">
    <text evidence="1">Belongs to the class-III pyridoxal-phosphate-dependent aminotransferase family. HemL subfamily.</text>
</comment>
<keyword id="KW-0149">Chlorophyll biosynthesis</keyword>
<keyword id="KW-0963">Cytoplasm</keyword>
<keyword id="KW-0413">Isomerase</keyword>
<keyword id="KW-0627">Porphyrin biosynthesis</keyword>
<keyword id="KW-0663">Pyridoxal phosphate</keyword>